<keyword id="KW-0028">Amino-acid biosynthesis</keyword>
<keyword id="KW-0055">Arginine biosynthesis</keyword>
<keyword id="KW-0963">Cytoplasm</keyword>
<keyword id="KW-0238">DNA-binding</keyword>
<keyword id="KW-0678">Repressor</keyword>
<keyword id="KW-0804">Transcription</keyword>
<keyword id="KW-0805">Transcription regulation</keyword>
<protein>
    <recommendedName>
        <fullName evidence="1">Arginine repressor</fullName>
    </recommendedName>
</protein>
<proteinExistence type="inferred from homology"/>
<reference key="1">
    <citation type="journal article" date="2004" name="Nucleic Acids Res.">
        <title>The genome sequence of Bacillus cereus ATCC 10987 reveals metabolic adaptations and a large plasmid related to Bacillus anthracis pXO1.</title>
        <authorList>
            <person name="Rasko D.A."/>
            <person name="Ravel J."/>
            <person name="Oekstad O.A."/>
            <person name="Helgason E."/>
            <person name="Cer R.Z."/>
            <person name="Jiang L."/>
            <person name="Shores K.A."/>
            <person name="Fouts D.E."/>
            <person name="Tourasse N.J."/>
            <person name="Angiuoli S.V."/>
            <person name="Kolonay J.F."/>
            <person name="Nelson W.C."/>
            <person name="Kolstoe A.-B."/>
            <person name="Fraser C.M."/>
            <person name="Read T.D."/>
        </authorList>
    </citation>
    <scope>NUCLEOTIDE SEQUENCE [LARGE SCALE GENOMIC DNA]</scope>
    <source>
        <strain>ATCC 10987 / NRS 248</strain>
    </source>
</reference>
<organism>
    <name type="scientific">Bacillus cereus (strain ATCC 10987 / NRS 248)</name>
    <dbReference type="NCBI Taxonomy" id="222523"/>
    <lineage>
        <taxon>Bacteria</taxon>
        <taxon>Bacillati</taxon>
        <taxon>Bacillota</taxon>
        <taxon>Bacilli</taxon>
        <taxon>Bacillales</taxon>
        <taxon>Bacillaceae</taxon>
        <taxon>Bacillus</taxon>
        <taxon>Bacillus cereus group</taxon>
    </lineage>
</organism>
<gene>
    <name evidence="1" type="primary">argR2</name>
    <name type="ordered locus">BCE_4247</name>
</gene>
<evidence type="ECO:0000255" key="1">
    <source>
        <dbReference type="HAMAP-Rule" id="MF_00173"/>
    </source>
</evidence>
<dbReference type="EMBL" id="AE017194">
    <property type="protein sequence ID" value="AAS43148.1"/>
    <property type="molecule type" value="Genomic_DNA"/>
</dbReference>
<dbReference type="SMR" id="Q731B9"/>
<dbReference type="KEGG" id="bca:BCE_4247"/>
<dbReference type="HOGENOM" id="CLU_097103_3_0_9"/>
<dbReference type="UniPathway" id="UPA00068"/>
<dbReference type="Proteomes" id="UP000002527">
    <property type="component" value="Chromosome"/>
</dbReference>
<dbReference type="GO" id="GO:0005737">
    <property type="term" value="C:cytoplasm"/>
    <property type="evidence" value="ECO:0007669"/>
    <property type="project" value="UniProtKB-SubCell"/>
</dbReference>
<dbReference type="GO" id="GO:0034618">
    <property type="term" value="F:arginine binding"/>
    <property type="evidence" value="ECO:0007669"/>
    <property type="project" value="InterPro"/>
</dbReference>
<dbReference type="GO" id="GO:0003677">
    <property type="term" value="F:DNA binding"/>
    <property type="evidence" value="ECO:0007669"/>
    <property type="project" value="UniProtKB-KW"/>
</dbReference>
<dbReference type="GO" id="GO:0003700">
    <property type="term" value="F:DNA-binding transcription factor activity"/>
    <property type="evidence" value="ECO:0007669"/>
    <property type="project" value="UniProtKB-UniRule"/>
</dbReference>
<dbReference type="GO" id="GO:0006526">
    <property type="term" value="P:L-arginine biosynthetic process"/>
    <property type="evidence" value="ECO:0007669"/>
    <property type="project" value="UniProtKB-UniPathway"/>
</dbReference>
<dbReference type="GO" id="GO:0051259">
    <property type="term" value="P:protein complex oligomerization"/>
    <property type="evidence" value="ECO:0007669"/>
    <property type="project" value="InterPro"/>
</dbReference>
<dbReference type="GO" id="GO:1900079">
    <property type="term" value="P:regulation of arginine biosynthetic process"/>
    <property type="evidence" value="ECO:0007669"/>
    <property type="project" value="UniProtKB-UniRule"/>
</dbReference>
<dbReference type="FunFam" id="1.10.10.10:FF:000172">
    <property type="entry name" value="Arginine repressor"/>
    <property type="match status" value="1"/>
</dbReference>
<dbReference type="FunFam" id="3.30.1360.40:FF:000006">
    <property type="entry name" value="Arginine repressor"/>
    <property type="match status" value="1"/>
</dbReference>
<dbReference type="Gene3D" id="3.30.1360.40">
    <property type="match status" value="1"/>
</dbReference>
<dbReference type="Gene3D" id="1.10.10.10">
    <property type="entry name" value="Winged helix-like DNA-binding domain superfamily/Winged helix DNA-binding domain"/>
    <property type="match status" value="1"/>
</dbReference>
<dbReference type="HAMAP" id="MF_00173">
    <property type="entry name" value="Arg_repressor"/>
    <property type="match status" value="1"/>
</dbReference>
<dbReference type="InterPro" id="IPR001669">
    <property type="entry name" value="Arg_repress"/>
</dbReference>
<dbReference type="InterPro" id="IPR020899">
    <property type="entry name" value="Arg_repress_C"/>
</dbReference>
<dbReference type="InterPro" id="IPR036251">
    <property type="entry name" value="Arg_repress_C_sf"/>
</dbReference>
<dbReference type="InterPro" id="IPR020900">
    <property type="entry name" value="Arg_repress_DNA-bd"/>
</dbReference>
<dbReference type="InterPro" id="IPR036388">
    <property type="entry name" value="WH-like_DNA-bd_sf"/>
</dbReference>
<dbReference type="InterPro" id="IPR036390">
    <property type="entry name" value="WH_DNA-bd_sf"/>
</dbReference>
<dbReference type="NCBIfam" id="TIGR01529">
    <property type="entry name" value="argR_whole"/>
    <property type="match status" value="1"/>
</dbReference>
<dbReference type="NCBIfam" id="NF003281">
    <property type="entry name" value="PRK04280.1"/>
    <property type="match status" value="1"/>
</dbReference>
<dbReference type="PANTHER" id="PTHR34471">
    <property type="entry name" value="ARGININE REPRESSOR"/>
    <property type="match status" value="1"/>
</dbReference>
<dbReference type="PANTHER" id="PTHR34471:SF1">
    <property type="entry name" value="ARGININE REPRESSOR"/>
    <property type="match status" value="1"/>
</dbReference>
<dbReference type="Pfam" id="PF01316">
    <property type="entry name" value="Arg_repressor"/>
    <property type="match status" value="1"/>
</dbReference>
<dbReference type="Pfam" id="PF02863">
    <property type="entry name" value="Arg_repressor_C"/>
    <property type="match status" value="1"/>
</dbReference>
<dbReference type="PRINTS" id="PR01467">
    <property type="entry name" value="ARGREPRESSOR"/>
</dbReference>
<dbReference type="SUPFAM" id="SSF55252">
    <property type="entry name" value="C-terminal domain of arginine repressor"/>
    <property type="match status" value="1"/>
</dbReference>
<dbReference type="SUPFAM" id="SSF46785">
    <property type="entry name" value="Winged helix' DNA-binding domain"/>
    <property type="match status" value="1"/>
</dbReference>
<feature type="chain" id="PRO_0000205061" description="Arginine repressor">
    <location>
        <begin position="1"/>
        <end position="149"/>
    </location>
</feature>
<comment type="function">
    <text evidence="1">Regulates arginine biosynthesis genes.</text>
</comment>
<comment type="pathway">
    <text>Amino-acid biosynthesis; L-arginine biosynthesis [regulation].</text>
</comment>
<comment type="subcellular location">
    <subcellularLocation>
        <location evidence="1">Cytoplasm</location>
    </subcellularLocation>
</comment>
<comment type="similarity">
    <text evidence="1">Belongs to the ArgR family.</text>
</comment>
<accession>Q731B9</accession>
<name>ARGR2_BACC1</name>
<sequence length="149" mass="16928">MNKGQRHIKIREIIANKEIETQDELVDILRNEGFNVTQATVSRDIKELHLVKVPLHDGRYKYSLPADQRFNPLQKLKRNLVDSFVKLDTAGHMLVLKTLPGNAHSLGALIDHLEWDEIIGTICGDDTCLIICRTPEDTGVVSDRFLNML</sequence>